<sequence length="42" mass="4819">EADEPLWLYKGDNIERAPTTADHPILPSIIDDVKLDPNRRYA</sequence>
<keyword id="KW-0044">Antibiotic</keyword>
<keyword id="KW-0929">Antimicrobial</keyword>
<keyword id="KW-0903">Direct protein sequencing</keyword>
<keyword id="KW-0295">Fungicide</keyword>
<keyword id="KW-0391">Immunity</keyword>
<keyword id="KW-0399">Innate immunity</keyword>
<keyword id="KW-1185">Reference proteome</keyword>
<keyword id="KW-0964">Secreted</keyword>
<name>LEB1_GALME</name>
<dbReference type="EnsemblMetazoa" id="XM_026901954.2">
    <property type="protein sequence ID" value="XP_026757755.1"/>
    <property type="gene ID" value="LOC113517304"/>
</dbReference>
<dbReference type="InParanoid" id="P85211"/>
<dbReference type="Proteomes" id="UP000504614">
    <property type="component" value="Unplaced"/>
</dbReference>
<dbReference type="GO" id="GO:0005615">
    <property type="term" value="C:extracellular space"/>
    <property type="evidence" value="ECO:0000314"/>
    <property type="project" value="UniProtKB"/>
</dbReference>
<dbReference type="GO" id="GO:0050832">
    <property type="term" value="P:defense response to fungus"/>
    <property type="evidence" value="ECO:0000314"/>
    <property type="project" value="UniProtKB"/>
</dbReference>
<dbReference type="GO" id="GO:0050830">
    <property type="term" value="P:defense response to Gram-positive bacterium"/>
    <property type="evidence" value="ECO:0000314"/>
    <property type="project" value="UniProtKB"/>
</dbReference>
<dbReference type="GO" id="GO:0045087">
    <property type="term" value="P:innate immune response"/>
    <property type="evidence" value="ECO:0000314"/>
    <property type="project" value="UniProtKB"/>
</dbReference>
<dbReference type="GO" id="GO:0031640">
    <property type="term" value="P:killing of cells of another organism"/>
    <property type="evidence" value="ECO:0007669"/>
    <property type="project" value="UniProtKB-KW"/>
</dbReference>
<comment type="function">
    <text evidence="2">Antimicrobial protein. Has antibacterial activity against the Gram-positive bacteria M.luteus (MIC=22.7 uM) and L.monocytogenes (MIC=90.9 uM). Lacks antibacterial activity against the Gram-positive bacteria B.circulans, S.aureus, and S.lutea, and the Gram-negative bacteria E.coli D31, E.coli ATCC 25922, and S.typhimurium. Has antifungal activity against A.niger (MIC=90.9 uM) and T.harzianum (MIC=90.9 uM), but lacks antifungal activity against S.cerevisiae, P.pastoris, Z.marxianus, C.albicans, C.fructus, and F.oxysporum.</text>
</comment>
<comment type="subcellular location">
    <subcellularLocation>
        <location evidence="2">Secreted</location>
    </subcellularLocation>
</comment>
<comment type="tissue specificity">
    <text evidence="2">Hemolymph.</text>
</comment>
<comment type="induction">
    <text evidence="2">By bacterial infection.</text>
</comment>
<comment type="mass spectrometry" mass="4820.1" method="Electrospray" evidence="2"/>
<comment type="similarity">
    <text evidence="1">Belongs to the lebocin family.</text>
</comment>
<feature type="peptide" id="PRO_0000298771" description="Lebocin-like anionic peptide 1" evidence="2">
    <location>
        <begin position="1"/>
        <end position="42"/>
    </location>
</feature>
<proteinExistence type="evidence at protein level"/>
<accession>P85211</accession>
<evidence type="ECO:0000255" key="1"/>
<evidence type="ECO:0000269" key="2">
    <source>
    </source>
</evidence>
<evidence type="ECO:0000305" key="3"/>
<reference evidence="3" key="1">
    <citation type="journal article" date="2007" name="Peptides">
        <title>Purification and characterization of eight peptides from Galleria mellonella immune hemolymph.</title>
        <authorList>
            <person name="Cytrynska M."/>
            <person name="Mak P."/>
            <person name="Zdybicka-Barabas A."/>
            <person name="Suder P."/>
            <person name="Jakubowicz T."/>
        </authorList>
    </citation>
    <scope>PROTEIN SEQUENCE</scope>
    <scope>FUNCTION</scope>
    <scope>SUBCELLULAR LOCATION</scope>
    <scope>TISSUE SPECIFICITY</scope>
    <scope>INDUCTION</scope>
    <scope>MASS SPECTROMETRY</scope>
    <source>
        <tissue evidence="2">Larval hemolymph</tissue>
    </source>
</reference>
<protein>
    <recommendedName>
        <fullName>Lebocin-like anionic peptide 1</fullName>
    </recommendedName>
</protein>
<organism>
    <name type="scientific">Galleria mellonella</name>
    <name type="common">Greater wax moth</name>
    <dbReference type="NCBI Taxonomy" id="7137"/>
    <lineage>
        <taxon>Eukaryota</taxon>
        <taxon>Metazoa</taxon>
        <taxon>Ecdysozoa</taxon>
        <taxon>Arthropoda</taxon>
        <taxon>Hexapoda</taxon>
        <taxon>Insecta</taxon>
        <taxon>Pterygota</taxon>
        <taxon>Neoptera</taxon>
        <taxon>Endopterygota</taxon>
        <taxon>Lepidoptera</taxon>
        <taxon>Glossata</taxon>
        <taxon>Ditrysia</taxon>
        <taxon>Pyraloidea</taxon>
        <taxon>Pyralidae</taxon>
        <taxon>Galleriinae</taxon>
        <taxon>Galleria</taxon>
    </lineage>
</organism>